<evidence type="ECO:0000250" key="1"/>
<evidence type="ECO:0000255" key="2"/>
<evidence type="ECO:0000256" key="3">
    <source>
        <dbReference type="SAM" id="MobiDB-lite"/>
    </source>
</evidence>
<evidence type="ECO:0000269" key="4">
    <source>
    </source>
</evidence>
<evidence type="ECO:0000305" key="5"/>
<evidence type="ECO:0007829" key="6">
    <source>
        <dbReference type="PDB" id="1YXE"/>
    </source>
</evidence>
<name>AMA1_PLAFF</name>
<dbReference type="EMBL" id="M27133">
    <property type="protein sequence ID" value="AAA29475.1"/>
    <property type="molecule type" value="Genomic_DNA"/>
</dbReference>
<dbReference type="EMBL" id="M27957">
    <property type="protein sequence ID" value="AAA29476.1"/>
    <property type="molecule type" value="mRNA"/>
</dbReference>
<dbReference type="PIR" id="A32499">
    <property type="entry name" value="A32499"/>
</dbReference>
<dbReference type="PDB" id="1YXE">
    <property type="method" value="NMR"/>
    <property type="chains" value="A=309-436"/>
</dbReference>
<dbReference type="PDB" id="2Q8A">
    <property type="method" value="X-ray"/>
    <property type="resolution" value="2.40 A"/>
    <property type="chains" value="A=104-438"/>
</dbReference>
<dbReference type="PDB" id="2Q8B">
    <property type="method" value="X-ray"/>
    <property type="resolution" value="2.30 A"/>
    <property type="chains" value="A=104-438"/>
</dbReference>
<dbReference type="PDBsum" id="1YXE"/>
<dbReference type="PDBsum" id="2Q8A"/>
<dbReference type="PDBsum" id="2Q8B"/>
<dbReference type="BMRB" id="P22621"/>
<dbReference type="SMR" id="P22621"/>
<dbReference type="GlyCosmos" id="P22621">
    <property type="glycosylation" value="6 sites, No reported glycans"/>
</dbReference>
<dbReference type="ABCD" id="P22621">
    <property type="antibodies" value="4 sequenced antibodies"/>
</dbReference>
<dbReference type="EvolutionaryTrace" id="P22621"/>
<dbReference type="GO" id="GO:0016020">
    <property type="term" value="C:membrane"/>
    <property type="evidence" value="ECO:0007669"/>
    <property type="project" value="UniProtKB-SubCell"/>
</dbReference>
<dbReference type="GO" id="GO:0044650">
    <property type="term" value="P:adhesion of symbiont to host cell"/>
    <property type="evidence" value="ECO:0000269"/>
    <property type="project" value="SigSci"/>
</dbReference>
<dbReference type="FunFam" id="4.10.1010.10:FF:000001">
    <property type="entry name" value="Apical membrane antigen 1"/>
    <property type="match status" value="1"/>
</dbReference>
<dbReference type="Gene3D" id="6.10.250.430">
    <property type="match status" value="1"/>
</dbReference>
<dbReference type="Gene3D" id="4.10.1010.10">
    <property type="entry name" value="Apical membrane antigen 1"/>
    <property type="match status" value="1"/>
</dbReference>
<dbReference type="Gene3D" id="3.50.4.10">
    <property type="entry name" value="Hepatocyte Growth Factor"/>
    <property type="match status" value="2"/>
</dbReference>
<dbReference type="InterPro" id="IPR003298">
    <property type="entry name" value="Apmem_Ag1"/>
</dbReference>
<dbReference type="InterPro" id="IPR024056">
    <property type="entry name" value="Apmem_Ag1_dom_sf"/>
</dbReference>
<dbReference type="Pfam" id="PF02430">
    <property type="entry name" value="AMA-1"/>
    <property type="match status" value="1"/>
</dbReference>
<dbReference type="PRINTS" id="PR01361">
    <property type="entry name" value="MEROZOITESA"/>
</dbReference>
<dbReference type="SMART" id="SM00815">
    <property type="entry name" value="AMA-1"/>
    <property type="match status" value="1"/>
</dbReference>
<dbReference type="SUPFAM" id="SSF82910">
    <property type="entry name" value="Apical membrane antigen 1"/>
    <property type="match status" value="1"/>
</dbReference>
<comment type="function">
    <text>Involved in parasite invasion of erythrocytes.</text>
</comment>
<comment type="subcellular location">
    <subcellularLocation>
        <location>Membrane</location>
        <topology>Single-pass type I membrane protein</topology>
    </subcellularLocation>
</comment>
<comment type="similarity">
    <text evidence="5">Belongs to the apicomplexan parasites AMA1 family.</text>
</comment>
<proteinExistence type="evidence at protein level"/>
<gene>
    <name type="primary">AMA-1</name>
    <name type="synonym">PF83</name>
</gene>
<keyword id="KW-0002">3D-structure</keyword>
<keyword id="KW-1015">Disulfide bond</keyword>
<keyword id="KW-0325">Glycoprotein</keyword>
<keyword id="KW-0461">Malaria</keyword>
<keyword id="KW-0472">Membrane</keyword>
<keyword id="KW-0732">Signal</keyword>
<keyword id="KW-0812">Transmembrane</keyword>
<keyword id="KW-1133">Transmembrane helix</keyword>
<feature type="signal peptide" evidence="2">
    <location>
        <begin position="1"/>
        <end position="24"/>
    </location>
</feature>
<feature type="chain" id="PRO_0000024611" description="Apical membrane antigen 1">
    <location>
        <begin position="25"/>
        <end position="622"/>
    </location>
</feature>
<feature type="topological domain" description="Extracellular" evidence="2">
    <location>
        <begin position="25"/>
        <end position="546"/>
    </location>
</feature>
<feature type="transmembrane region" description="Helical" evidence="2">
    <location>
        <begin position="547"/>
        <end position="567"/>
    </location>
</feature>
<feature type="topological domain" description="Cytoplasmic" evidence="2">
    <location>
        <begin position="568"/>
        <end position="622"/>
    </location>
</feature>
<feature type="region of interest" description="Disordered" evidence="3">
    <location>
        <begin position="578"/>
        <end position="607"/>
    </location>
</feature>
<feature type="compositionally biased region" description="Basic and acidic residues" evidence="3">
    <location>
        <begin position="578"/>
        <end position="594"/>
    </location>
</feature>
<feature type="glycosylation site" description="N-linked (GlcNAc...) asparagine" evidence="2">
    <location>
        <position position="162"/>
    </location>
</feature>
<feature type="glycosylation site" description="N-linked (GlcNAc...) asparagine" evidence="2">
    <location>
        <position position="286"/>
    </location>
</feature>
<feature type="glycosylation site" description="N-linked (GlcNAc...) asparagine" evidence="2">
    <location>
        <position position="371"/>
    </location>
</feature>
<feature type="glycosylation site" description="N-linked (GlcNAc...) asparagine" evidence="2">
    <location>
        <position position="421"/>
    </location>
</feature>
<feature type="glycosylation site" description="N-linked (GlcNAc...) asparagine" evidence="2">
    <location>
        <position position="422"/>
    </location>
</feature>
<feature type="glycosylation site" description="N-linked (GlcNAc...) asparagine" evidence="2">
    <location>
        <position position="499"/>
    </location>
</feature>
<feature type="disulfide bond" evidence="1">
    <location>
        <begin position="149"/>
        <end position="302"/>
    </location>
</feature>
<feature type="disulfide bond" evidence="1">
    <location>
        <begin position="217"/>
        <end position="247"/>
    </location>
</feature>
<feature type="disulfide bond" evidence="1">
    <location>
        <begin position="263"/>
        <end position="275"/>
    </location>
</feature>
<feature type="disulfide bond" evidence="4">
    <location>
        <begin position="320"/>
        <end position="418"/>
    </location>
</feature>
<feature type="disulfide bond" evidence="4">
    <location>
        <begin position="337"/>
        <end position="409"/>
    </location>
</feature>
<feature type="disulfide bond" evidence="1">
    <location>
        <begin position="443"/>
        <end position="502"/>
    </location>
</feature>
<feature type="disulfide bond" evidence="1">
    <location>
        <begin position="490"/>
        <end position="507"/>
    </location>
</feature>
<feature type="disulfide bond" evidence="1">
    <location>
        <begin position="492"/>
        <end position="509"/>
    </location>
</feature>
<feature type="sequence conflict" description="In Ref. 1; AAA29476." evidence="5" ref="1">
    <original>Q</original>
    <variation>E</variation>
    <location>
        <position position="308"/>
    </location>
</feature>
<feature type="sequence conflict" description="In Ref. 1; AAA29476." evidence="5" ref="1">
    <original>I</original>
    <variation>N</variation>
    <location>
        <position position="332"/>
    </location>
</feature>
<feature type="sequence conflict" description="In Ref. 1; AAA29476." evidence="5" ref="1">
    <original>Q</original>
    <variation>H</variation>
    <location>
        <position position="407"/>
    </location>
</feature>
<feature type="sequence conflict" description="In Ref. 1; AAA29476." evidence="5" ref="1">
    <original>H</original>
    <variation>N</variation>
    <location>
        <position position="439"/>
    </location>
</feature>
<feature type="sequence conflict" description="In Ref. 1; AAA29476." evidence="5" ref="1">
    <original>I</original>
    <variation>M</variation>
    <location>
        <position position="496"/>
    </location>
</feature>
<feature type="sequence conflict" description="In Ref. 1; AAA29476." evidence="5" ref="1">
    <original>N</original>
    <variation>R</variation>
    <location>
        <position position="503"/>
    </location>
</feature>
<feature type="strand" evidence="6">
    <location>
        <begin position="316"/>
        <end position="319"/>
    </location>
</feature>
<feature type="strand" evidence="6">
    <location>
        <begin position="327"/>
        <end position="329"/>
    </location>
</feature>
<feature type="turn" evidence="6">
    <location>
        <begin position="331"/>
        <end position="333"/>
    </location>
</feature>
<feature type="strand" evidence="6">
    <location>
        <begin position="334"/>
        <end position="336"/>
    </location>
</feature>
<feature type="helix" evidence="6">
    <location>
        <begin position="345"/>
        <end position="347"/>
    </location>
</feature>
<feature type="helix" evidence="6">
    <location>
        <begin position="357"/>
        <end position="359"/>
    </location>
</feature>
<feature type="helix" evidence="6">
    <location>
        <begin position="361"/>
        <end position="365"/>
    </location>
</feature>
<feature type="strand" evidence="6">
    <location>
        <begin position="368"/>
        <end position="370"/>
    </location>
</feature>
<feature type="helix" evidence="6">
    <location>
        <begin position="371"/>
        <end position="374"/>
    </location>
</feature>
<feature type="helix" evidence="6">
    <location>
        <begin position="375"/>
        <end position="377"/>
    </location>
</feature>
<feature type="helix" evidence="6">
    <location>
        <begin position="386"/>
        <end position="388"/>
    </location>
</feature>
<feature type="helix" evidence="6">
    <location>
        <begin position="393"/>
        <end position="395"/>
    </location>
</feature>
<feature type="strand" evidence="6">
    <location>
        <begin position="400"/>
        <end position="403"/>
    </location>
</feature>
<feature type="turn" evidence="6">
    <location>
        <begin position="404"/>
        <end position="407"/>
    </location>
</feature>
<feature type="strand" evidence="6">
    <location>
        <begin position="408"/>
        <end position="412"/>
    </location>
</feature>
<protein>
    <recommendedName>
        <fullName>Apical membrane antigen 1</fullName>
    </recommendedName>
    <alternativeName>
        <fullName>Merozoite surface antigen</fullName>
    </alternativeName>
</protein>
<sequence length="622" mass="72010">MRKLYCVLLLSAFEFTYMINFGRGQNYWEHPYQKSDVYHPINEHREHPKEYQYPLHQEHTYQQEDSGEDENTLQHAYPIDHEGAEPAPQEQNLFSSIEIVERSNYMGNPWTEYMAKYDIEEVHGSGIRVDLGEDAEVAGTQYRLPSGKCPVFGKGIIIENSNTTFLTPVATGNQYLKDGGFAFPPTEPLMSPMTLDEMRHFYKDNKYVKNLDELTLCSRHAGNMIPDNDKNSNYKYPAVYDDKDKKCHILYIAAQENNGPRYCNKDESKRNSMFCFRPAKDISFQNYTYLSKNVVDNWEKVCPRKNLQNAKFGLWVDGNCEDIPHVNEFSAIDLFECNKLVFELSASDQPKQYEQHLTDYEKIKEGFKNKNASMIKSAFLPTGAFKADRYKSHGKGYNWGNYNTETQKCEIFNVKPTCLINNSSYIATTALSHPIEVEHNFPCSLYKNEIMKEIERESKRIKLNDNDDEGNKKIIAPRIFISDDKDSLKCPCDPEIVSNSTCNFFVCKCVERRAEVTSNNEVVVKEEYKDEYADIPEHKPTYDKMKIIIASSAAVAVLATILMVYLYKRKGNAEKYDKMDEPQHYGKSNSRNDEMLDPEASFWGEEKRASHTTPVLMEKPYY</sequence>
<reference key="1">
    <citation type="journal article" date="1989" name="Mol. Cell. Biol.">
        <title>Integral membrane protein located in the apical complex of Plasmodium falciparum.</title>
        <authorList>
            <person name="Peterson M.G."/>
            <person name="Marshall V.M."/>
            <person name="Smythe J.A."/>
            <person name="Crewther P.E."/>
            <person name="Lew A."/>
            <person name="Silva A."/>
            <person name="Anders R.F."/>
            <person name="Kemp D.J."/>
        </authorList>
    </citation>
    <scope>NUCLEOTIDE SEQUENCE [GENOMIC DNA / MRNA]</scope>
</reference>
<reference key="2">
    <citation type="journal article" date="2005" name="J. Mol. Biol.">
        <title>Structure and inter-domain interactions of domain II from the blood-stage malarial protein, apical membrane antigen 1.</title>
        <authorList>
            <person name="Feng Z.-P."/>
            <person name="Keizer D.W."/>
            <person name="Stevenson R.A."/>
            <person name="Yao S."/>
            <person name="Babon J.J."/>
            <person name="Murphy V.J."/>
            <person name="Anders R.F."/>
            <person name="Norton R.S."/>
        </authorList>
    </citation>
    <scope>STRUCTURE BY NMR OF 309-436</scope>
    <scope>DISULFIDE BONDS</scope>
</reference>
<organism>
    <name type="scientific">Plasmodium falciparum (isolate FC27 / Papua New Guinea)</name>
    <dbReference type="NCBI Taxonomy" id="5837"/>
    <lineage>
        <taxon>Eukaryota</taxon>
        <taxon>Sar</taxon>
        <taxon>Alveolata</taxon>
        <taxon>Apicomplexa</taxon>
        <taxon>Aconoidasida</taxon>
        <taxon>Haemosporida</taxon>
        <taxon>Plasmodiidae</taxon>
        <taxon>Plasmodium</taxon>
        <taxon>Plasmodium (Laverania)</taxon>
    </lineage>
</organism>
<accession>P22621</accession>